<name>SMG_SALA4</name>
<proteinExistence type="inferred from homology"/>
<comment type="similarity">
    <text evidence="1">Belongs to the Smg family.</text>
</comment>
<gene>
    <name evidence="1" type="primary">smg</name>
    <name type="ordered locus">SeAg_B3600</name>
</gene>
<organism>
    <name type="scientific">Salmonella agona (strain SL483)</name>
    <dbReference type="NCBI Taxonomy" id="454166"/>
    <lineage>
        <taxon>Bacteria</taxon>
        <taxon>Pseudomonadati</taxon>
        <taxon>Pseudomonadota</taxon>
        <taxon>Gammaproteobacteria</taxon>
        <taxon>Enterobacterales</taxon>
        <taxon>Enterobacteriaceae</taxon>
        <taxon>Salmonella</taxon>
    </lineage>
</organism>
<accession>B5F7R1</accession>
<feature type="chain" id="PRO_1000129897" description="Protein Smg">
    <location>
        <begin position="1"/>
        <end position="157"/>
    </location>
</feature>
<evidence type="ECO:0000255" key="1">
    <source>
        <dbReference type="HAMAP-Rule" id="MF_00598"/>
    </source>
</evidence>
<reference key="1">
    <citation type="journal article" date="2011" name="J. Bacteriol.">
        <title>Comparative genomics of 28 Salmonella enterica isolates: evidence for CRISPR-mediated adaptive sublineage evolution.</title>
        <authorList>
            <person name="Fricke W.F."/>
            <person name="Mammel M.K."/>
            <person name="McDermott P.F."/>
            <person name="Tartera C."/>
            <person name="White D.G."/>
            <person name="Leclerc J.E."/>
            <person name="Ravel J."/>
            <person name="Cebula T.A."/>
        </authorList>
    </citation>
    <scope>NUCLEOTIDE SEQUENCE [LARGE SCALE GENOMIC DNA]</scope>
    <source>
        <strain>SL483</strain>
    </source>
</reference>
<protein>
    <recommendedName>
        <fullName evidence="1">Protein Smg</fullName>
    </recommendedName>
</protein>
<dbReference type="EMBL" id="CP001138">
    <property type="protein sequence ID" value="ACH50762.1"/>
    <property type="molecule type" value="Genomic_DNA"/>
</dbReference>
<dbReference type="RefSeq" id="WP_000460663.1">
    <property type="nucleotide sequence ID" value="NC_011149.1"/>
</dbReference>
<dbReference type="SMR" id="B5F7R1"/>
<dbReference type="KEGG" id="sea:SeAg_B3600"/>
<dbReference type="HOGENOM" id="CLU_133242_0_0_6"/>
<dbReference type="Proteomes" id="UP000008819">
    <property type="component" value="Chromosome"/>
</dbReference>
<dbReference type="HAMAP" id="MF_00598">
    <property type="entry name" value="Smg"/>
    <property type="match status" value="1"/>
</dbReference>
<dbReference type="InterPro" id="IPR007456">
    <property type="entry name" value="Smg"/>
</dbReference>
<dbReference type="NCBIfam" id="NF002897">
    <property type="entry name" value="PRK03430.1"/>
    <property type="match status" value="1"/>
</dbReference>
<dbReference type="PANTHER" id="PTHR38692">
    <property type="entry name" value="PROTEIN SMG"/>
    <property type="match status" value="1"/>
</dbReference>
<dbReference type="PANTHER" id="PTHR38692:SF1">
    <property type="entry name" value="PROTEIN SMG"/>
    <property type="match status" value="1"/>
</dbReference>
<dbReference type="Pfam" id="PF04361">
    <property type="entry name" value="DUF494"/>
    <property type="match status" value="1"/>
</dbReference>
<sequence>MFDVLMYLFETYIHNEAELRVDQDRLERDLTDAGFDREDIYNALLWLEKLADYQDGLAEPMQLASDPLSMRIYTVEECERLDASCRGFLLFLEQIQVLNLETREMVIERVLALDTAEFDLEDLKWVILMVLFNIPGCENAYQQMEELLFEVNEGMLH</sequence>